<comment type="function">
    <text evidence="3">ATP-dependent microtubule severing protein. Stimulates microtubule minus-end depolymerization and poleward microtubule flux in the mitotic spindle. Regulates microtubule stability in the neuromuscular junction synapse. Involved in lipid metabolism by regulating the size and distribution of lipid droplets. Involved in axon regeneration by regulating microtubule severing.</text>
</comment>
<comment type="catalytic activity">
    <reaction evidence="3">
        <text>n ATP + n H2O + a microtubule = n ADP + n phosphate + (n+1) alpha/beta tubulin heterodimers.</text>
        <dbReference type="EC" id="5.6.1.1"/>
    </reaction>
</comment>
<comment type="subunit">
    <text evidence="3">Homohexamer. The homohexamer is stabilized by ATP-binding. The homohexamer may adopt a ring conformation through which microtubules pass prior to being severed. Interacts with microtubules. Interacts with atl; may be involved in microtubule dynamics.</text>
</comment>
<comment type="subcellular location">
    <subcellularLocation>
        <location evidence="3">Membrane</location>
        <topology evidence="3">Peripheral membrane protein</topology>
    </subcellularLocation>
    <subcellularLocation>
        <location evidence="3">Cytoplasm</location>
        <location evidence="3">Cytoskeleton</location>
        <location evidence="3">Microtubule organizing center</location>
        <location evidence="3">Centrosome</location>
    </subcellularLocation>
    <subcellularLocation>
        <location evidence="3">Cytoplasm</location>
        <location evidence="3">Cytoskeleton</location>
    </subcellularLocation>
    <subcellularLocation>
        <location evidence="3">Chromosome</location>
    </subcellularLocation>
    <subcellularLocation>
        <location evidence="3">Lipid droplet</location>
    </subcellularLocation>
    <text evidence="3">Forms an intramembrane hairpin-like structure in the membrane. Colocalizes with cellular microtubule arrays. Localizes to chromosomes from prometaphase/metaphase to anaphase, and this requires microtubules. Localizes to discrete punctate cytoplasmic foci which may correspond to secretory vesicles.</text>
</comment>
<comment type="similarity">
    <text evidence="3">Belongs to the AAA ATPase family. Spastin subfamily.</text>
</comment>
<feature type="chain" id="PRO_0000367147" description="Spastin">
    <location>
        <begin position="1"/>
        <end position="788"/>
    </location>
</feature>
<feature type="topological domain" description="Cytoplasmic" evidence="3">
    <location>
        <begin position="1"/>
        <end position="116"/>
    </location>
</feature>
<feature type="intramembrane region" description="Helical" evidence="3">
    <location>
        <begin position="117"/>
        <end position="137"/>
    </location>
</feature>
<feature type="topological domain" description="Cytoplasmic" evidence="3">
    <location>
        <begin position="138"/>
        <end position="788"/>
    </location>
</feature>
<feature type="domain" description="MIT" evidence="2">
    <location>
        <begin position="240"/>
        <end position="315"/>
    </location>
</feature>
<feature type="region of interest" description="Required for localization to punctate cytoplasmic foci" evidence="1">
    <location>
        <begin position="1"/>
        <end position="227"/>
    </location>
</feature>
<feature type="region of interest" description="Disordered" evidence="4">
    <location>
        <begin position="1"/>
        <end position="105"/>
    </location>
</feature>
<feature type="region of interest" description="Sufficient for interaction with microtubules and microtubule severing" evidence="1">
    <location>
        <begin position="227"/>
        <end position="788"/>
    </location>
</feature>
<feature type="region of interest" description="Disordered" evidence="4">
    <location>
        <begin position="330"/>
        <end position="484"/>
    </location>
</feature>
<feature type="region of interest" description="Required for interaction with microtubules" evidence="1">
    <location>
        <begin position="471"/>
        <end position="485"/>
    </location>
</feature>
<feature type="compositionally biased region" description="Low complexity" evidence="4">
    <location>
        <begin position="8"/>
        <end position="48"/>
    </location>
</feature>
<feature type="compositionally biased region" description="Low complexity" evidence="4">
    <location>
        <begin position="57"/>
        <end position="75"/>
    </location>
</feature>
<feature type="compositionally biased region" description="Basic and acidic residues" evidence="4">
    <location>
        <begin position="330"/>
        <end position="353"/>
    </location>
</feature>
<feature type="compositionally biased region" description="Low complexity" evidence="4">
    <location>
        <begin position="380"/>
        <end position="400"/>
    </location>
</feature>
<feature type="compositionally biased region" description="Polar residues" evidence="4">
    <location>
        <begin position="419"/>
        <end position="433"/>
    </location>
</feature>
<feature type="compositionally biased region" description="Polar residues" evidence="4">
    <location>
        <begin position="453"/>
        <end position="469"/>
    </location>
</feature>
<feature type="binding site" evidence="3">
    <location>
        <begin position="553"/>
        <end position="560"/>
    </location>
    <ligand>
        <name>ATP</name>
        <dbReference type="ChEBI" id="CHEBI:30616"/>
    </ligand>
</feature>
<dbReference type="EC" id="5.6.1.1" evidence="3"/>
<dbReference type="EMBL" id="CM000070">
    <property type="protein sequence ID" value="EAL27941.1"/>
    <property type="molecule type" value="Genomic_DNA"/>
</dbReference>
<dbReference type="RefSeq" id="XP_001358798.1">
    <property type="nucleotide sequence ID" value="XM_001358761.2"/>
</dbReference>
<dbReference type="SMR" id="Q298L4"/>
<dbReference type="FunCoup" id="Q298L4">
    <property type="interactions" value="1678"/>
</dbReference>
<dbReference type="STRING" id="46245.Q298L4"/>
<dbReference type="EnsemblMetazoa" id="FBtr0285560">
    <property type="protein sequence ID" value="FBpp0283998"/>
    <property type="gene ID" value="FBgn0079271"/>
</dbReference>
<dbReference type="GeneID" id="4801757"/>
<dbReference type="KEGG" id="dpo:4801757"/>
<dbReference type="CTD" id="42846"/>
<dbReference type="eggNOG" id="KOG0740">
    <property type="taxonomic scope" value="Eukaryota"/>
</dbReference>
<dbReference type="HOGENOM" id="CLU_000688_21_5_1"/>
<dbReference type="InParanoid" id="Q298L4"/>
<dbReference type="OMA" id="KSREPML"/>
<dbReference type="PhylomeDB" id="Q298L4"/>
<dbReference type="Proteomes" id="UP000001819">
    <property type="component" value="Chromosome 2"/>
</dbReference>
<dbReference type="Bgee" id="FBgn0079271">
    <property type="expression patterns" value="Expressed in female reproductive system and 2 other cell types or tissues"/>
</dbReference>
<dbReference type="ExpressionAtlas" id="Q298L4">
    <property type="expression patterns" value="baseline"/>
</dbReference>
<dbReference type="GO" id="GO:0005813">
    <property type="term" value="C:centrosome"/>
    <property type="evidence" value="ECO:0000250"/>
    <property type="project" value="UniProtKB"/>
</dbReference>
<dbReference type="GO" id="GO:0005694">
    <property type="term" value="C:chromosome"/>
    <property type="evidence" value="ECO:0007669"/>
    <property type="project" value="UniProtKB-SubCell"/>
</dbReference>
<dbReference type="GO" id="GO:0005737">
    <property type="term" value="C:cytoplasm"/>
    <property type="evidence" value="ECO:0007669"/>
    <property type="project" value="UniProtKB-UniRule"/>
</dbReference>
<dbReference type="GO" id="GO:0005811">
    <property type="term" value="C:lipid droplet"/>
    <property type="evidence" value="ECO:0007669"/>
    <property type="project" value="UniProtKB-SubCell"/>
</dbReference>
<dbReference type="GO" id="GO:0016020">
    <property type="term" value="C:membrane"/>
    <property type="evidence" value="ECO:0007669"/>
    <property type="project" value="UniProtKB-SubCell"/>
</dbReference>
<dbReference type="GO" id="GO:0005874">
    <property type="term" value="C:microtubule"/>
    <property type="evidence" value="ECO:0007669"/>
    <property type="project" value="UniProtKB-UniRule"/>
</dbReference>
<dbReference type="GO" id="GO:0005819">
    <property type="term" value="C:spindle"/>
    <property type="evidence" value="ECO:0007669"/>
    <property type="project" value="UniProtKB-UniRule"/>
</dbReference>
<dbReference type="GO" id="GO:0005524">
    <property type="term" value="F:ATP binding"/>
    <property type="evidence" value="ECO:0007669"/>
    <property type="project" value="UniProtKB-UniRule"/>
</dbReference>
<dbReference type="GO" id="GO:0016887">
    <property type="term" value="F:ATP hydrolysis activity"/>
    <property type="evidence" value="ECO:0007669"/>
    <property type="project" value="InterPro"/>
</dbReference>
<dbReference type="GO" id="GO:0008017">
    <property type="term" value="F:microtubule binding"/>
    <property type="evidence" value="ECO:0000250"/>
    <property type="project" value="UniProtKB"/>
</dbReference>
<dbReference type="GO" id="GO:0008568">
    <property type="term" value="F:microtubule severing ATPase activity"/>
    <property type="evidence" value="ECO:0000250"/>
    <property type="project" value="UniProtKB"/>
</dbReference>
<dbReference type="GO" id="GO:0008344">
    <property type="term" value="P:adult locomotory behavior"/>
    <property type="evidence" value="ECO:0007669"/>
    <property type="project" value="UniProtKB-UniRule"/>
</dbReference>
<dbReference type="GO" id="GO:0030154">
    <property type="term" value="P:cell differentiation"/>
    <property type="evidence" value="ECO:0007669"/>
    <property type="project" value="UniProtKB-KW"/>
</dbReference>
<dbReference type="GO" id="GO:0051301">
    <property type="term" value="P:cell division"/>
    <property type="evidence" value="ECO:0007669"/>
    <property type="project" value="UniProtKB-KW"/>
</dbReference>
<dbReference type="GO" id="GO:0051013">
    <property type="term" value="P:microtubule severing"/>
    <property type="evidence" value="ECO:0000250"/>
    <property type="project" value="UniProtKB"/>
</dbReference>
<dbReference type="GO" id="GO:0007079">
    <property type="term" value="P:mitotic chromosome movement towards spindle pole"/>
    <property type="evidence" value="ECO:0007669"/>
    <property type="project" value="UniProtKB-UniRule"/>
</dbReference>
<dbReference type="GO" id="GO:0000022">
    <property type="term" value="P:mitotic spindle elongation"/>
    <property type="evidence" value="ECO:0007669"/>
    <property type="project" value="UniProtKB-UniRule"/>
</dbReference>
<dbReference type="GO" id="GO:0007399">
    <property type="term" value="P:nervous system development"/>
    <property type="evidence" value="ECO:0007669"/>
    <property type="project" value="UniProtKB-KW"/>
</dbReference>
<dbReference type="GO" id="GO:0031117">
    <property type="term" value="P:positive regulation of microtubule depolymerization"/>
    <property type="evidence" value="ECO:0007669"/>
    <property type="project" value="UniProtKB-UniRule"/>
</dbReference>
<dbReference type="GO" id="GO:0034214">
    <property type="term" value="P:protein hexamerization"/>
    <property type="evidence" value="ECO:0007669"/>
    <property type="project" value="UniProtKB-UniRule"/>
</dbReference>
<dbReference type="GO" id="GO:0050803">
    <property type="term" value="P:regulation of synapse structure or activity"/>
    <property type="evidence" value="ECO:0007669"/>
    <property type="project" value="UniProtKB-UniRule"/>
</dbReference>
<dbReference type="CDD" id="cd02679">
    <property type="entry name" value="MIT_spastin"/>
    <property type="match status" value="1"/>
</dbReference>
<dbReference type="CDD" id="cd19524">
    <property type="entry name" value="RecA-like_spastin"/>
    <property type="match status" value="1"/>
</dbReference>
<dbReference type="FunFam" id="3.40.50.300:FF:000093">
    <property type="entry name" value="Fidgetin-like 1"/>
    <property type="match status" value="1"/>
</dbReference>
<dbReference type="FunFam" id="1.10.8.60:FF:000036">
    <property type="entry name" value="Spastin"/>
    <property type="match status" value="1"/>
</dbReference>
<dbReference type="FunFam" id="1.20.58.80:FF:000006">
    <property type="entry name" value="Spastin"/>
    <property type="match status" value="1"/>
</dbReference>
<dbReference type="Gene3D" id="1.10.8.60">
    <property type="match status" value="1"/>
</dbReference>
<dbReference type="Gene3D" id="3.40.50.300">
    <property type="entry name" value="P-loop containing nucleotide triphosphate hydrolases"/>
    <property type="match status" value="1"/>
</dbReference>
<dbReference type="Gene3D" id="1.20.58.80">
    <property type="entry name" value="Phosphotransferase system, lactose/cellobiose-type IIA subunit"/>
    <property type="match status" value="1"/>
</dbReference>
<dbReference type="HAMAP" id="MF_03021">
    <property type="entry name" value="Spastin"/>
    <property type="match status" value="1"/>
</dbReference>
<dbReference type="InterPro" id="IPR003593">
    <property type="entry name" value="AAA+_ATPase"/>
</dbReference>
<dbReference type="InterPro" id="IPR041569">
    <property type="entry name" value="AAA_lid_3"/>
</dbReference>
<dbReference type="InterPro" id="IPR003959">
    <property type="entry name" value="ATPase_AAA_core"/>
</dbReference>
<dbReference type="InterPro" id="IPR003960">
    <property type="entry name" value="ATPase_AAA_CS"/>
</dbReference>
<dbReference type="InterPro" id="IPR007330">
    <property type="entry name" value="MIT_dom"/>
</dbReference>
<dbReference type="InterPro" id="IPR050304">
    <property type="entry name" value="MT-severing_AAA_ATPase"/>
</dbReference>
<dbReference type="InterPro" id="IPR027417">
    <property type="entry name" value="P-loop_NTPase"/>
</dbReference>
<dbReference type="InterPro" id="IPR015415">
    <property type="entry name" value="Spast_Vps4_C"/>
</dbReference>
<dbReference type="InterPro" id="IPR017179">
    <property type="entry name" value="Spastin"/>
</dbReference>
<dbReference type="PANTHER" id="PTHR23074">
    <property type="entry name" value="AAA DOMAIN-CONTAINING"/>
    <property type="match status" value="1"/>
</dbReference>
<dbReference type="PANTHER" id="PTHR23074:SF86">
    <property type="entry name" value="SPASTIN"/>
    <property type="match status" value="1"/>
</dbReference>
<dbReference type="Pfam" id="PF00004">
    <property type="entry name" value="AAA"/>
    <property type="match status" value="1"/>
</dbReference>
<dbReference type="Pfam" id="PF17862">
    <property type="entry name" value="AAA_lid_3"/>
    <property type="match status" value="1"/>
</dbReference>
<dbReference type="Pfam" id="PF09336">
    <property type="entry name" value="Vps4_C"/>
    <property type="match status" value="1"/>
</dbReference>
<dbReference type="SMART" id="SM00382">
    <property type="entry name" value="AAA"/>
    <property type="match status" value="1"/>
</dbReference>
<dbReference type="SMART" id="SM00745">
    <property type="entry name" value="MIT"/>
    <property type="match status" value="1"/>
</dbReference>
<dbReference type="SUPFAM" id="SSF52540">
    <property type="entry name" value="P-loop containing nucleoside triphosphate hydrolases"/>
    <property type="match status" value="1"/>
</dbReference>
<dbReference type="PROSITE" id="PS00674">
    <property type="entry name" value="AAA"/>
    <property type="match status" value="1"/>
</dbReference>
<reference key="1">
    <citation type="journal article" date="2005" name="Genome Res.">
        <title>Comparative genome sequencing of Drosophila pseudoobscura: chromosomal, gene, and cis-element evolution.</title>
        <authorList>
            <person name="Richards S."/>
            <person name="Liu Y."/>
            <person name="Bettencourt B.R."/>
            <person name="Hradecky P."/>
            <person name="Letovsky S."/>
            <person name="Nielsen R."/>
            <person name="Thornton K."/>
            <person name="Hubisz M.J."/>
            <person name="Chen R."/>
            <person name="Meisel R.P."/>
            <person name="Couronne O."/>
            <person name="Hua S."/>
            <person name="Smith M.A."/>
            <person name="Zhang P."/>
            <person name="Liu J."/>
            <person name="Bussemaker H.J."/>
            <person name="van Batenburg M.F."/>
            <person name="Howells S.L."/>
            <person name="Scherer S.E."/>
            <person name="Sodergren E."/>
            <person name="Matthews B.B."/>
            <person name="Crosby M.A."/>
            <person name="Schroeder A.J."/>
            <person name="Ortiz-Barrientos D."/>
            <person name="Rives C.M."/>
            <person name="Metzker M.L."/>
            <person name="Muzny D.M."/>
            <person name="Scott G."/>
            <person name="Steffen D."/>
            <person name="Wheeler D.A."/>
            <person name="Worley K.C."/>
            <person name="Havlak P."/>
            <person name="Durbin K.J."/>
            <person name="Egan A."/>
            <person name="Gill R."/>
            <person name="Hume J."/>
            <person name="Morgan M.B."/>
            <person name="Miner G."/>
            <person name="Hamilton C."/>
            <person name="Huang Y."/>
            <person name="Waldron L."/>
            <person name="Verduzco D."/>
            <person name="Clerc-Blankenburg K.P."/>
            <person name="Dubchak I."/>
            <person name="Noor M.A.F."/>
            <person name="Anderson W."/>
            <person name="White K.P."/>
            <person name="Clark A.G."/>
            <person name="Schaeffer S.W."/>
            <person name="Gelbart W.M."/>
            <person name="Weinstock G.M."/>
            <person name="Gibbs R.A."/>
        </authorList>
    </citation>
    <scope>NUCLEOTIDE SEQUENCE [LARGE SCALE GENOMIC DNA]</scope>
    <source>
        <strain>MV2-25 / Tucson 14011-0121.94</strain>
    </source>
</reference>
<sequence>MVRTKNQSSSSSASSSSHKSPIKSHGGSGSAAAGTAGHPVSRSSSSHRTSIDDRKSATNVSSSSNRRTTPGSSPDGDGDDDTTTTDDLTPTSTSAPRSAGGPSSVHKQNLYVVSFPIIFLFNVLRSLIYQLFCIFRYLYGASTKVIYRPHRRDCNIEIVVQNNSNNKDQKHQQLTSSQSLNYPLEVTSGEAASEQQVQQPLPQQRYRALQPLEMAGANRSGSGYSPGPGDPLLAKQKHHHRRAFEYISKALKIDEENEGHKELAIELYRKGIKELEDGIAVDCWSGRGDVWDRAQRLHDKMQTNLSMARDRLHFLALREEDFQMHRLSLKEEQKPNPSREQHQKPQKAREAADKPMLTNLTNDPVKLKTRSSGYGPKNGLTTPRISATATTPTSSSSLASGRKLTIGTKRPGNLAVAANKSQTLPRNLGSKTSVGAVRQPGKTAATPPAVRRQFSSGRNTPPQRSRTPINNNGASGSGSGASTPVVTVKGVEQKLVQLILDEIVEGGAKVEWTDIAGQEVAKQALQEMVILPSVRPELFTGLRAPAKGLLLFGPPGNGKTLLARAVATECSATFLNISAASLTSKYVGDGEKLVRALFAVARHLQPSIIFIDEVDSLLSERSSGEHEASRRLKTEFLVEFDGLPGNPDGDRIVVLAATNRPQELDEAALRRFTKRVYVSLPDEQTRELLLNRLLQKQGSPLDTDALRRLSKITDGYSGSDLTALAKDAALEPIRELNVEQVKCLDINAMRHITEKDFHNSLKRIRRSVAQQSLSSYEKWSSDYGDITI</sequence>
<protein>
    <recommendedName>
        <fullName evidence="3">Spastin</fullName>
        <ecNumber evidence="3">5.6.1.1</ecNumber>
    </recommendedName>
</protein>
<gene>
    <name evidence="3" type="primary">spas</name>
    <name type="ORF">GA19274</name>
</gene>
<accession>Q298L4</accession>
<organism>
    <name type="scientific">Drosophila pseudoobscura pseudoobscura</name>
    <name type="common">Fruit fly</name>
    <dbReference type="NCBI Taxonomy" id="46245"/>
    <lineage>
        <taxon>Eukaryota</taxon>
        <taxon>Metazoa</taxon>
        <taxon>Ecdysozoa</taxon>
        <taxon>Arthropoda</taxon>
        <taxon>Hexapoda</taxon>
        <taxon>Insecta</taxon>
        <taxon>Pterygota</taxon>
        <taxon>Neoptera</taxon>
        <taxon>Endopterygota</taxon>
        <taxon>Diptera</taxon>
        <taxon>Brachycera</taxon>
        <taxon>Muscomorpha</taxon>
        <taxon>Ephydroidea</taxon>
        <taxon>Drosophilidae</taxon>
        <taxon>Drosophila</taxon>
        <taxon>Sophophora</taxon>
    </lineage>
</organism>
<proteinExistence type="inferred from homology"/>
<keyword id="KW-0067">ATP-binding</keyword>
<keyword id="KW-0131">Cell cycle</keyword>
<keyword id="KW-0132">Cell division</keyword>
<keyword id="KW-0158">Chromosome</keyword>
<keyword id="KW-0963">Cytoplasm</keyword>
<keyword id="KW-0206">Cytoskeleton</keyword>
<keyword id="KW-0217">Developmental protein</keyword>
<keyword id="KW-0221">Differentiation</keyword>
<keyword id="KW-0413">Isomerase</keyword>
<keyword id="KW-0551">Lipid droplet</keyword>
<keyword id="KW-0472">Membrane</keyword>
<keyword id="KW-0493">Microtubule</keyword>
<keyword id="KW-0498">Mitosis</keyword>
<keyword id="KW-0524">Neurogenesis</keyword>
<keyword id="KW-0547">Nucleotide-binding</keyword>
<keyword id="KW-1185">Reference proteome</keyword>
<evidence type="ECO:0000250" key="1">
    <source>
        <dbReference type="UniProtKB" id="Q8I0P1"/>
    </source>
</evidence>
<evidence type="ECO:0000255" key="2"/>
<evidence type="ECO:0000255" key="3">
    <source>
        <dbReference type="HAMAP-Rule" id="MF_03021"/>
    </source>
</evidence>
<evidence type="ECO:0000256" key="4">
    <source>
        <dbReference type="SAM" id="MobiDB-lite"/>
    </source>
</evidence>
<name>SPAST_DROPS</name>